<organism>
    <name type="scientific">Escherichia coli O81 (strain ED1a)</name>
    <dbReference type="NCBI Taxonomy" id="585397"/>
    <lineage>
        <taxon>Bacteria</taxon>
        <taxon>Pseudomonadati</taxon>
        <taxon>Pseudomonadota</taxon>
        <taxon>Gammaproteobacteria</taxon>
        <taxon>Enterobacterales</taxon>
        <taxon>Enterobacteriaceae</taxon>
        <taxon>Escherichia</taxon>
    </lineage>
</organism>
<proteinExistence type="inferred from homology"/>
<feature type="chain" id="PRO_1000149860" description="UPF0283 membrane protein YcjF">
    <location>
        <begin position="1"/>
        <end position="353"/>
    </location>
</feature>
<feature type="transmembrane region" description="Helical" evidence="1">
    <location>
        <begin position="70"/>
        <end position="90"/>
    </location>
</feature>
<feature type="transmembrane region" description="Helical" evidence="1">
    <location>
        <begin position="100"/>
        <end position="120"/>
    </location>
</feature>
<feature type="transmembrane region" description="Helical" evidence="1">
    <location>
        <begin position="213"/>
        <end position="233"/>
    </location>
</feature>
<evidence type="ECO:0000255" key="1">
    <source>
        <dbReference type="HAMAP-Rule" id="MF_01085"/>
    </source>
</evidence>
<protein>
    <recommendedName>
        <fullName evidence="1">UPF0283 membrane protein YcjF</fullName>
    </recommendedName>
</protein>
<comment type="subcellular location">
    <subcellularLocation>
        <location evidence="1">Cell inner membrane</location>
        <topology evidence="1">Multi-pass membrane protein</topology>
    </subcellularLocation>
</comment>
<comment type="similarity">
    <text evidence="1">Belongs to the UPF0283 family.</text>
</comment>
<gene>
    <name evidence="1" type="primary">ycjF</name>
    <name type="ordered locus">ECED1_1530</name>
</gene>
<reference key="1">
    <citation type="journal article" date="2009" name="PLoS Genet.">
        <title>Organised genome dynamics in the Escherichia coli species results in highly diverse adaptive paths.</title>
        <authorList>
            <person name="Touchon M."/>
            <person name="Hoede C."/>
            <person name="Tenaillon O."/>
            <person name="Barbe V."/>
            <person name="Baeriswyl S."/>
            <person name="Bidet P."/>
            <person name="Bingen E."/>
            <person name="Bonacorsi S."/>
            <person name="Bouchier C."/>
            <person name="Bouvet O."/>
            <person name="Calteau A."/>
            <person name="Chiapello H."/>
            <person name="Clermont O."/>
            <person name="Cruveiller S."/>
            <person name="Danchin A."/>
            <person name="Diard M."/>
            <person name="Dossat C."/>
            <person name="Karoui M.E."/>
            <person name="Frapy E."/>
            <person name="Garry L."/>
            <person name="Ghigo J.M."/>
            <person name="Gilles A.M."/>
            <person name="Johnson J."/>
            <person name="Le Bouguenec C."/>
            <person name="Lescat M."/>
            <person name="Mangenot S."/>
            <person name="Martinez-Jehanne V."/>
            <person name="Matic I."/>
            <person name="Nassif X."/>
            <person name="Oztas S."/>
            <person name="Petit M.A."/>
            <person name="Pichon C."/>
            <person name="Rouy Z."/>
            <person name="Ruf C.S."/>
            <person name="Schneider D."/>
            <person name="Tourret J."/>
            <person name="Vacherie B."/>
            <person name="Vallenet D."/>
            <person name="Medigue C."/>
            <person name="Rocha E.P.C."/>
            <person name="Denamur E."/>
        </authorList>
    </citation>
    <scope>NUCLEOTIDE SEQUENCE [LARGE SCALE GENOMIC DNA]</scope>
    <source>
        <strain>ED1a</strain>
    </source>
</reference>
<dbReference type="EMBL" id="CU928162">
    <property type="protein sequence ID" value="CAR07728.2"/>
    <property type="molecule type" value="Genomic_DNA"/>
</dbReference>
<dbReference type="RefSeq" id="WP_000138728.1">
    <property type="nucleotide sequence ID" value="NC_011745.1"/>
</dbReference>
<dbReference type="SMR" id="B7MUG2"/>
<dbReference type="KEGG" id="ecq:ECED1_1530"/>
<dbReference type="HOGENOM" id="CLU_057693_2_0_6"/>
<dbReference type="Proteomes" id="UP000000748">
    <property type="component" value="Chromosome"/>
</dbReference>
<dbReference type="GO" id="GO:0005886">
    <property type="term" value="C:plasma membrane"/>
    <property type="evidence" value="ECO:0007669"/>
    <property type="project" value="UniProtKB-SubCell"/>
</dbReference>
<dbReference type="HAMAP" id="MF_01085">
    <property type="entry name" value="UPF0283"/>
    <property type="match status" value="1"/>
</dbReference>
<dbReference type="InterPro" id="IPR021147">
    <property type="entry name" value="DUF697"/>
</dbReference>
<dbReference type="InterPro" id="IPR006507">
    <property type="entry name" value="UPF0283"/>
</dbReference>
<dbReference type="NCBIfam" id="TIGR01620">
    <property type="entry name" value="hyp_HI0043"/>
    <property type="match status" value="1"/>
</dbReference>
<dbReference type="PANTHER" id="PTHR39342">
    <property type="entry name" value="UPF0283 MEMBRANE PROTEIN YCJF"/>
    <property type="match status" value="1"/>
</dbReference>
<dbReference type="PANTHER" id="PTHR39342:SF1">
    <property type="entry name" value="UPF0283 MEMBRANE PROTEIN YCJF"/>
    <property type="match status" value="1"/>
</dbReference>
<dbReference type="Pfam" id="PF05128">
    <property type="entry name" value="DUF697"/>
    <property type="match status" value="1"/>
</dbReference>
<accession>B7MUG2</accession>
<keyword id="KW-0997">Cell inner membrane</keyword>
<keyword id="KW-1003">Cell membrane</keyword>
<keyword id="KW-0472">Membrane</keyword>
<keyword id="KW-0812">Transmembrane</keyword>
<keyword id="KW-1133">Transmembrane helix</keyword>
<sequence>MTEPLKPRIDFDGPLEVDQNPKFRAQQTFDENQAQNFAPATLDEAQEEEGQVEAVMDAALRPKRSLWRKMVMGGLALFGASVVGQGVQWTMNAWQTQDWVALGGCAAGALIIGAGVGSVVTEWRRLWRLRQRAHERDEARDLLHSHGTGKGRAFCEKLAQQAGIDQSHPALQRWYASIHETQNDREVVSLYAHLVQPVLDAQARREISRSAAESTLMIAVSPLALVDMAFIAWRNLRLINRIATLYGIELGYYSRLRLFKLVLLNIAFAGASELVREVGMDWMSQDLAARLSTRAAQGIGAGLLTARLGIKAMELCRPLPWIDDDKPRLGDFRRQLIGQVKETLQKGKTPSEK</sequence>
<name>YCJF_ECO81</name>